<gene>
    <name evidence="1" type="primary">accA</name>
    <name type="ordered locus">BOV_1954</name>
</gene>
<comment type="function">
    <text evidence="1">Component of the acetyl coenzyme A carboxylase (ACC) complex. First, biotin carboxylase catalyzes the carboxylation of biotin on its carrier protein (BCCP) and then the CO(2) group is transferred by the carboxyltransferase to acetyl-CoA to form malonyl-CoA.</text>
</comment>
<comment type="catalytic activity">
    <reaction evidence="1">
        <text>N(6)-carboxybiotinyl-L-lysyl-[protein] + acetyl-CoA = N(6)-biotinyl-L-lysyl-[protein] + malonyl-CoA</text>
        <dbReference type="Rhea" id="RHEA:54728"/>
        <dbReference type="Rhea" id="RHEA-COMP:10505"/>
        <dbReference type="Rhea" id="RHEA-COMP:10506"/>
        <dbReference type="ChEBI" id="CHEBI:57288"/>
        <dbReference type="ChEBI" id="CHEBI:57384"/>
        <dbReference type="ChEBI" id="CHEBI:83144"/>
        <dbReference type="ChEBI" id="CHEBI:83145"/>
        <dbReference type="EC" id="2.1.3.15"/>
    </reaction>
</comment>
<comment type="pathway">
    <text evidence="1">Lipid metabolism; malonyl-CoA biosynthesis; malonyl-CoA from acetyl-CoA: step 1/1.</text>
</comment>
<comment type="subunit">
    <text evidence="1">Acetyl-CoA carboxylase is a heterohexamer composed of biotin carboxyl carrier protein (AccB), biotin carboxylase (AccC) and two subunits each of ACCase subunit alpha (AccA) and ACCase subunit beta (AccD).</text>
</comment>
<comment type="subcellular location">
    <subcellularLocation>
        <location evidence="1">Cytoplasm</location>
    </subcellularLocation>
</comment>
<comment type="similarity">
    <text evidence="1">Belongs to the AccA family.</text>
</comment>
<protein>
    <recommendedName>
        <fullName evidence="1">Acetyl-coenzyme A carboxylase carboxyl transferase subunit alpha</fullName>
        <shortName evidence="1">ACCase subunit alpha</shortName>
        <shortName evidence="1">Acetyl-CoA carboxylase carboxyltransferase subunit alpha</shortName>
        <ecNumber evidence="1">2.1.3.15</ecNumber>
    </recommendedName>
</protein>
<accession>A5VSZ7</accession>
<evidence type="ECO:0000255" key="1">
    <source>
        <dbReference type="HAMAP-Rule" id="MF_00823"/>
    </source>
</evidence>
<evidence type="ECO:0000255" key="2">
    <source>
        <dbReference type="PROSITE-ProRule" id="PRU01137"/>
    </source>
</evidence>
<reference key="1">
    <citation type="journal article" date="2009" name="PLoS ONE">
        <title>Genome degradation in Brucella ovis corresponds with narrowing of its host range and tissue tropism.</title>
        <authorList>
            <person name="Tsolis R.M."/>
            <person name="Seshadri R."/>
            <person name="Santos R.L."/>
            <person name="Sangari F.J."/>
            <person name="Lobo J.M."/>
            <person name="de Jong M.F."/>
            <person name="Ren Q."/>
            <person name="Myers G."/>
            <person name="Brinkac L.M."/>
            <person name="Nelson W.C."/>
            <person name="Deboy R.T."/>
            <person name="Angiuoli S."/>
            <person name="Khouri H."/>
            <person name="Dimitrov G."/>
            <person name="Robinson J.R."/>
            <person name="Mulligan S."/>
            <person name="Walker R.L."/>
            <person name="Elzer P.E."/>
            <person name="Hassan K.A."/>
            <person name="Paulsen I.T."/>
        </authorList>
    </citation>
    <scope>NUCLEOTIDE SEQUENCE [LARGE SCALE GENOMIC DNA]</scope>
    <source>
        <strain>ATCC 25840 / 63/290 / NCTC 10512</strain>
    </source>
</reference>
<organism>
    <name type="scientific">Brucella ovis (strain ATCC 25840 / 63/290 / NCTC 10512)</name>
    <dbReference type="NCBI Taxonomy" id="444178"/>
    <lineage>
        <taxon>Bacteria</taxon>
        <taxon>Pseudomonadati</taxon>
        <taxon>Pseudomonadota</taxon>
        <taxon>Alphaproteobacteria</taxon>
        <taxon>Hyphomicrobiales</taxon>
        <taxon>Brucellaceae</taxon>
        <taxon>Brucella/Ochrobactrum group</taxon>
        <taxon>Brucella</taxon>
    </lineage>
</organism>
<feature type="chain" id="PRO_1000062584" description="Acetyl-coenzyme A carboxylase carboxyl transferase subunit alpha">
    <location>
        <begin position="1"/>
        <end position="317"/>
    </location>
</feature>
<feature type="domain" description="CoA carboxyltransferase C-terminal" evidence="2">
    <location>
        <begin position="40"/>
        <end position="293"/>
    </location>
</feature>
<sequence length="317" mass="35013">MYNYLDFEKPVADLEGQILELKKLAQEQGSVEMGDEISRLEKRSADALKDIYRKLTPWQKAQIARHPDRPHCLEYIDRLFTEFTPLAGDRKFANDEALQAGFGRFNGTPVAIIGQEKGSDTKTRLKHNFGSARPEGYRKAVRIMEMADRFQLPLITFVDTAGAYPGVSAEERGQAEAIARSTAECLKLRVPVISIIIGEGGSGGAIAIAVANRVYMLEHSIYSVISPEGAASILWHDSTRAKDAASNMRITAQDLFDLKIIDGIIPEPLGGAHRGKESVIDATGDIIAASLRSMKDIDGETLKQERRQKFLEIGRNI</sequence>
<name>ACCA_BRUO2</name>
<proteinExistence type="inferred from homology"/>
<dbReference type="EC" id="2.1.3.15" evidence="1"/>
<dbReference type="EMBL" id="CP000708">
    <property type="protein sequence ID" value="ABQ61837.1"/>
    <property type="molecule type" value="Genomic_DNA"/>
</dbReference>
<dbReference type="RefSeq" id="WP_002965096.1">
    <property type="nucleotide sequence ID" value="NC_009505.1"/>
</dbReference>
<dbReference type="SMR" id="A5VSZ7"/>
<dbReference type="GeneID" id="45125288"/>
<dbReference type="KEGG" id="bov:BOV_1954"/>
<dbReference type="HOGENOM" id="CLU_015486_0_2_5"/>
<dbReference type="PhylomeDB" id="A5VSZ7"/>
<dbReference type="UniPathway" id="UPA00655">
    <property type="reaction ID" value="UER00711"/>
</dbReference>
<dbReference type="Proteomes" id="UP000006383">
    <property type="component" value="Chromosome I"/>
</dbReference>
<dbReference type="GO" id="GO:0009317">
    <property type="term" value="C:acetyl-CoA carboxylase complex"/>
    <property type="evidence" value="ECO:0007669"/>
    <property type="project" value="InterPro"/>
</dbReference>
<dbReference type="GO" id="GO:0003989">
    <property type="term" value="F:acetyl-CoA carboxylase activity"/>
    <property type="evidence" value="ECO:0007669"/>
    <property type="project" value="InterPro"/>
</dbReference>
<dbReference type="GO" id="GO:0005524">
    <property type="term" value="F:ATP binding"/>
    <property type="evidence" value="ECO:0007669"/>
    <property type="project" value="UniProtKB-KW"/>
</dbReference>
<dbReference type="GO" id="GO:0016743">
    <property type="term" value="F:carboxyl- or carbamoyltransferase activity"/>
    <property type="evidence" value="ECO:0007669"/>
    <property type="project" value="UniProtKB-UniRule"/>
</dbReference>
<dbReference type="GO" id="GO:0006633">
    <property type="term" value="P:fatty acid biosynthetic process"/>
    <property type="evidence" value="ECO:0007669"/>
    <property type="project" value="UniProtKB-KW"/>
</dbReference>
<dbReference type="GO" id="GO:2001295">
    <property type="term" value="P:malonyl-CoA biosynthetic process"/>
    <property type="evidence" value="ECO:0007669"/>
    <property type="project" value="UniProtKB-UniRule"/>
</dbReference>
<dbReference type="Gene3D" id="3.90.226.10">
    <property type="entry name" value="2-enoyl-CoA Hydratase, Chain A, domain 1"/>
    <property type="match status" value="1"/>
</dbReference>
<dbReference type="HAMAP" id="MF_00823">
    <property type="entry name" value="AcetylCoA_CT_alpha"/>
    <property type="match status" value="1"/>
</dbReference>
<dbReference type="InterPro" id="IPR001095">
    <property type="entry name" value="Acetyl_CoA_COase_a_su"/>
</dbReference>
<dbReference type="InterPro" id="IPR029045">
    <property type="entry name" value="ClpP/crotonase-like_dom_sf"/>
</dbReference>
<dbReference type="InterPro" id="IPR011763">
    <property type="entry name" value="COA_CT_C"/>
</dbReference>
<dbReference type="NCBIfam" id="TIGR00513">
    <property type="entry name" value="accA"/>
    <property type="match status" value="1"/>
</dbReference>
<dbReference type="NCBIfam" id="NF041504">
    <property type="entry name" value="AccA_sub"/>
    <property type="match status" value="1"/>
</dbReference>
<dbReference type="NCBIfam" id="NF004344">
    <property type="entry name" value="PRK05724.1"/>
    <property type="match status" value="1"/>
</dbReference>
<dbReference type="PANTHER" id="PTHR42853">
    <property type="entry name" value="ACETYL-COENZYME A CARBOXYLASE CARBOXYL TRANSFERASE SUBUNIT ALPHA"/>
    <property type="match status" value="1"/>
</dbReference>
<dbReference type="PANTHER" id="PTHR42853:SF3">
    <property type="entry name" value="ACETYL-COENZYME A CARBOXYLASE CARBOXYL TRANSFERASE SUBUNIT ALPHA, CHLOROPLASTIC"/>
    <property type="match status" value="1"/>
</dbReference>
<dbReference type="Pfam" id="PF03255">
    <property type="entry name" value="ACCA"/>
    <property type="match status" value="1"/>
</dbReference>
<dbReference type="PRINTS" id="PR01069">
    <property type="entry name" value="ACCCTRFRASEA"/>
</dbReference>
<dbReference type="SUPFAM" id="SSF52096">
    <property type="entry name" value="ClpP/crotonase"/>
    <property type="match status" value="1"/>
</dbReference>
<dbReference type="PROSITE" id="PS50989">
    <property type="entry name" value="COA_CT_CTER"/>
    <property type="match status" value="1"/>
</dbReference>
<keyword id="KW-0067">ATP-binding</keyword>
<keyword id="KW-0963">Cytoplasm</keyword>
<keyword id="KW-0275">Fatty acid biosynthesis</keyword>
<keyword id="KW-0276">Fatty acid metabolism</keyword>
<keyword id="KW-0444">Lipid biosynthesis</keyword>
<keyword id="KW-0443">Lipid metabolism</keyword>
<keyword id="KW-0547">Nucleotide-binding</keyword>
<keyword id="KW-0808">Transferase</keyword>